<accession>A4WAM2</accession>
<gene>
    <name evidence="1" type="primary">arnD</name>
    <name type="ordered locus">Ent638_2076</name>
</gene>
<proteinExistence type="inferred from homology"/>
<name>ARND_ENT38</name>
<comment type="function">
    <text evidence="1">Catalyzes the deformylation of 4-deoxy-4-formamido-L-arabinose-phosphoundecaprenol to 4-amino-4-deoxy-L-arabinose-phosphoundecaprenol. The modified arabinose is attached to lipid A and is required for resistance to polymyxin and cationic antimicrobial peptides.</text>
</comment>
<comment type="catalytic activity">
    <reaction evidence="1">
        <text>4-deoxy-4-formamido-alpha-L-arabinopyranosyl di-trans,octa-cis-undecaprenyl phosphate + H2O = 4-amino-4-deoxy-alpha-L-arabinopyranosyl di-trans,octa-cis-undecaprenyl phosphate + formate</text>
        <dbReference type="Rhea" id="RHEA:27734"/>
        <dbReference type="ChEBI" id="CHEBI:15377"/>
        <dbReference type="ChEBI" id="CHEBI:15740"/>
        <dbReference type="ChEBI" id="CHEBI:58909"/>
        <dbReference type="ChEBI" id="CHEBI:60463"/>
        <dbReference type="EC" id="3.5.1.n3"/>
    </reaction>
</comment>
<comment type="pathway">
    <text evidence="1">Glycolipid biosynthesis; 4-amino-4-deoxy-alpha-L-arabinose undecaprenyl phosphate biosynthesis; 4-amino-4-deoxy-alpha-L-arabinose undecaprenyl phosphate from UDP-4-deoxy-4-formamido-beta-L-arabinose and undecaprenyl phosphate: step 2/2.</text>
</comment>
<comment type="pathway">
    <text evidence="1">Bacterial outer membrane biogenesis; lipopolysaccharide biosynthesis.</text>
</comment>
<comment type="similarity">
    <text evidence="1">Belongs to the polysaccharide deacetylase family. ArnD deformylase subfamily.</text>
</comment>
<organism>
    <name type="scientific">Enterobacter sp. (strain 638)</name>
    <dbReference type="NCBI Taxonomy" id="399742"/>
    <lineage>
        <taxon>Bacteria</taxon>
        <taxon>Pseudomonadati</taxon>
        <taxon>Pseudomonadota</taxon>
        <taxon>Gammaproteobacteria</taxon>
        <taxon>Enterobacterales</taxon>
        <taxon>Enterobacteriaceae</taxon>
        <taxon>Enterobacter</taxon>
    </lineage>
</organism>
<reference key="1">
    <citation type="journal article" date="2010" name="PLoS Genet.">
        <title>Genome sequence of the plant growth promoting endophytic bacterium Enterobacter sp. 638.</title>
        <authorList>
            <person name="Taghavi S."/>
            <person name="van der Lelie D."/>
            <person name="Hoffman A."/>
            <person name="Zhang Y.B."/>
            <person name="Walla M.D."/>
            <person name="Vangronsveld J."/>
            <person name="Newman L."/>
            <person name="Monchy S."/>
        </authorList>
    </citation>
    <scope>NUCLEOTIDE SEQUENCE [LARGE SCALE GENOMIC DNA]</scope>
    <source>
        <strain>638</strain>
    </source>
</reference>
<keyword id="KW-0046">Antibiotic resistance</keyword>
<keyword id="KW-0378">Hydrolase</keyword>
<keyword id="KW-0441">Lipid A biosynthesis</keyword>
<keyword id="KW-0444">Lipid biosynthesis</keyword>
<keyword id="KW-0443">Lipid metabolism</keyword>
<keyword id="KW-0448">Lipopolysaccharide biosynthesis</keyword>
<protein>
    <recommendedName>
        <fullName evidence="1">Probable 4-deoxy-4-formamido-L-arabinose-phosphoundecaprenol deformylase ArnD</fullName>
        <ecNumber evidence="1">3.5.1.n3</ecNumber>
    </recommendedName>
</protein>
<sequence>MRKVGLRIDVDTWRGTQQGVPHLLEILSLHGIQATFFVSVGPDNMGRHLWRLVKPQFLWKILRSKAASLYGWDILLAGTAWPGRQIGAGNADIISAAADHHEVGLHAWDHFAWQTWAGVWDNAHLEKHIRLGLDSLSQIIEQPVTCSAVAGWRADQRVVKAKESFGFRYNSDCRGTTPFRPVLADGSTGTVQIPVTLPTWDEVIGEGVSRENYNRFILDRIKQDTGTPVYTIHAEVEGIVMRKHFSELLEMAAQEGITFCPLSELLPDDLSTLPLGKVVRGAIPGREGWLGCQQLIDH</sequence>
<evidence type="ECO:0000255" key="1">
    <source>
        <dbReference type="HAMAP-Rule" id="MF_01870"/>
    </source>
</evidence>
<dbReference type="EC" id="3.5.1.n3" evidence="1"/>
<dbReference type="EMBL" id="CP000653">
    <property type="protein sequence ID" value="ABP60752.1"/>
    <property type="molecule type" value="Genomic_DNA"/>
</dbReference>
<dbReference type="RefSeq" id="WP_012017467.1">
    <property type="nucleotide sequence ID" value="NC_009436.1"/>
</dbReference>
<dbReference type="SMR" id="A4WAM2"/>
<dbReference type="STRING" id="399742.Ent638_2076"/>
<dbReference type="KEGG" id="ent:Ent638_2076"/>
<dbReference type="eggNOG" id="COG0726">
    <property type="taxonomic scope" value="Bacteria"/>
</dbReference>
<dbReference type="HOGENOM" id="CLU_084199_0_0_6"/>
<dbReference type="OrthoDB" id="5589314at2"/>
<dbReference type="UniPathway" id="UPA00030"/>
<dbReference type="UniPathway" id="UPA00036">
    <property type="reaction ID" value="UER00496"/>
</dbReference>
<dbReference type="Proteomes" id="UP000000230">
    <property type="component" value="Chromosome"/>
</dbReference>
<dbReference type="GO" id="GO:0016020">
    <property type="term" value="C:membrane"/>
    <property type="evidence" value="ECO:0007669"/>
    <property type="project" value="GOC"/>
</dbReference>
<dbReference type="GO" id="GO:0016811">
    <property type="term" value="F:hydrolase activity, acting on carbon-nitrogen (but not peptide) bonds, in linear amides"/>
    <property type="evidence" value="ECO:0007669"/>
    <property type="project" value="UniProtKB-UniRule"/>
</dbReference>
<dbReference type="GO" id="GO:0036108">
    <property type="term" value="P:4-amino-4-deoxy-alpha-L-arabinopyranosyl undecaprenyl phosphate biosynthetic process"/>
    <property type="evidence" value="ECO:0007669"/>
    <property type="project" value="UniProtKB-UniRule"/>
</dbReference>
<dbReference type="GO" id="GO:0009245">
    <property type="term" value="P:lipid A biosynthetic process"/>
    <property type="evidence" value="ECO:0007669"/>
    <property type="project" value="UniProtKB-UniRule"/>
</dbReference>
<dbReference type="GO" id="GO:0009103">
    <property type="term" value="P:lipopolysaccharide biosynthetic process"/>
    <property type="evidence" value="ECO:0007669"/>
    <property type="project" value="UniProtKB-UniRule"/>
</dbReference>
<dbReference type="GO" id="GO:0046677">
    <property type="term" value="P:response to antibiotic"/>
    <property type="evidence" value="ECO:0007669"/>
    <property type="project" value="UniProtKB-KW"/>
</dbReference>
<dbReference type="Gene3D" id="3.20.20.370">
    <property type="entry name" value="Glycoside hydrolase/deacetylase"/>
    <property type="match status" value="1"/>
</dbReference>
<dbReference type="HAMAP" id="MF_01870">
    <property type="entry name" value="ArnD"/>
    <property type="match status" value="1"/>
</dbReference>
<dbReference type="InterPro" id="IPR023557">
    <property type="entry name" value="ArnD"/>
</dbReference>
<dbReference type="InterPro" id="IPR011330">
    <property type="entry name" value="Glyco_hydro/deAcase_b/a-brl"/>
</dbReference>
<dbReference type="InterPro" id="IPR002509">
    <property type="entry name" value="NODB_dom"/>
</dbReference>
<dbReference type="InterPro" id="IPR050248">
    <property type="entry name" value="Polysacc_deacetylase_ArnD"/>
</dbReference>
<dbReference type="NCBIfam" id="NF011923">
    <property type="entry name" value="PRK15394.1"/>
    <property type="match status" value="1"/>
</dbReference>
<dbReference type="PANTHER" id="PTHR10587:SF137">
    <property type="entry name" value="4-DEOXY-4-FORMAMIDO-L-ARABINOSE-PHOSPHOUNDECAPRENOL DEFORMYLASE ARND-RELATED"/>
    <property type="match status" value="1"/>
</dbReference>
<dbReference type="PANTHER" id="PTHR10587">
    <property type="entry name" value="GLYCOSYL TRANSFERASE-RELATED"/>
    <property type="match status" value="1"/>
</dbReference>
<dbReference type="Pfam" id="PF01522">
    <property type="entry name" value="Polysacc_deac_1"/>
    <property type="match status" value="1"/>
</dbReference>
<dbReference type="SUPFAM" id="SSF88713">
    <property type="entry name" value="Glycoside hydrolase/deacetylase"/>
    <property type="match status" value="1"/>
</dbReference>
<dbReference type="PROSITE" id="PS51677">
    <property type="entry name" value="NODB"/>
    <property type="match status" value="1"/>
</dbReference>
<feature type="chain" id="PRO_0000383492" description="Probable 4-deoxy-4-formamido-L-arabinose-phosphoundecaprenol deformylase ArnD">
    <location>
        <begin position="1"/>
        <end position="298"/>
    </location>
</feature>
<feature type="domain" description="NodB homology" evidence="1">
    <location>
        <begin position="2"/>
        <end position="260"/>
    </location>
</feature>